<accession>Q8DRV7</accession>
<comment type="similarity">
    <text evidence="1">Belongs to the bacterial ribosomal protein bL32 family.</text>
</comment>
<feature type="chain" id="PRO_0000172414" description="Large ribosomal subunit protein bL32">
    <location>
        <begin position="1"/>
        <end position="60"/>
    </location>
</feature>
<reference key="1">
    <citation type="journal article" date="2002" name="Proc. Natl. Acad. Sci. U.S.A.">
        <title>Genome sequence of Streptococcus mutans UA159, a cariogenic dental pathogen.</title>
        <authorList>
            <person name="Ajdic D.J."/>
            <person name="McShan W.M."/>
            <person name="McLaughlin R.E."/>
            <person name="Savic G."/>
            <person name="Chang J."/>
            <person name="Carson M.B."/>
            <person name="Primeaux C."/>
            <person name="Tian R."/>
            <person name="Kenton S."/>
            <person name="Jia H.G."/>
            <person name="Lin S.P."/>
            <person name="Qian Y."/>
            <person name="Li S."/>
            <person name="Zhu H."/>
            <person name="Najar F.Z."/>
            <person name="Lai H."/>
            <person name="White J."/>
            <person name="Roe B.A."/>
            <person name="Ferretti J.J."/>
        </authorList>
    </citation>
    <scope>NUCLEOTIDE SEQUENCE [LARGE SCALE GENOMIC DNA]</scope>
    <source>
        <strain>ATCC 700610 / UA159</strain>
    </source>
</reference>
<gene>
    <name evidence="1" type="primary">rpmF</name>
    <name type="ordered locus">SMU_2104a</name>
</gene>
<organism>
    <name type="scientific">Streptococcus mutans serotype c (strain ATCC 700610 / UA159)</name>
    <dbReference type="NCBI Taxonomy" id="210007"/>
    <lineage>
        <taxon>Bacteria</taxon>
        <taxon>Bacillati</taxon>
        <taxon>Bacillota</taxon>
        <taxon>Bacilli</taxon>
        <taxon>Lactobacillales</taxon>
        <taxon>Streptococcaceae</taxon>
        <taxon>Streptococcus</taxon>
    </lineage>
</organism>
<evidence type="ECO:0000255" key="1">
    <source>
        <dbReference type="HAMAP-Rule" id="MF_00340"/>
    </source>
</evidence>
<evidence type="ECO:0000305" key="2"/>
<sequence>MAVPARRTSKAKKNKRRTHYNLTAPTVKFDETTGDYSRSHRVSLKGYYKGRKIAKANAAK</sequence>
<keyword id="KW-1185">Reference proteome</keyword>
<keyword id="KW-0687">Ribonucleoprotein</keyword>
<keyword id="KW-0689">Ribosomal protein</keyword>
<dbReference type="EMBL" id="AE014133">
    <property type="protein sequence ID" value="AAN59698.1"/>
    <property type="molecule type" value="Genomic_DNA"/>
</dbReference>
<dbReference type="RefSeq" id="NP_722392.1">
    <property type="nucleotide sequence ID" value="NC_004350.2"/>
</dbReference>
<dbReference type="RefSeq" id="WP_002262411.1">
    <property type="nucleotide sequence ID" value="NC_004350.2"/>
</dbReference>
<dbReference type="SMR" id="Q8DRV7"/>
<dbReference type="STRING" id="210007.SMU_2104a"/>
<dbReference type="GeneID" id="93860318"/>
<dbReference type="KEGG" id="smu:SMU_2104a"/>
<dbReference type="PATRIC" id="fig|210007.7.peg.1874"/>
<dbReference type="eggNOG" id="COG0333">
    <property type="taxonomic scope" value="Bacteria"/>
</dbReference>
<dbReference type="HOGENOM" id="CLU_129084_2_3_9"/>
<dbReference type="OrthoDB" id="9812874at2"/>
<dbReference type="PhylomeDB" id="Q8DRV7"/>
<dbReference type="Proteomes" id="UP000002512">
    <property type="component" value="Chromosome"/>
</dbReference>
<dbReference type="GO" id="GO:0015934">
    <property type="term" value="C:large ribosomal subunit"/>
    <property type="evidence" value="ECO:0007669"/>
    <property type="project" value="InterPro"/>
</dbReference>
<dbReference type="GO" id="GO:0003735">
    <property type="term" value="F:structural constituent of ribosome"/>
    <property type="evidence" value="ECO:0007669"/>
    <property type="project" value="InterPro"/>
</dbReference>
<dbReference type="GO" id="GO:0006412">
    <property type="term" value="P:translation"/>
    <property type="evidence" value="ECO:0007669"/>
    <property type="project" value="UniProtKB-UniRule"/>
</dbReference>
<dbReference type="HAMAP" id="MF_00340">
    <property type="entry name" value="Ribosomal_bL32"/>
    <property type="match status" value="1"/>
</dbReference>
<dbReference type="InterPro" id="IPR002677">
    <property type="entry name" value="Ribosomal_bL32"/>
</dbReference>
<dbReference type="InterPro" id="IPR044957">
    <property type="entry name" value="Ribosomal_bL32_bact"/>
</dbReference>
<dbReference type="InterPro" id="IPR011332">
    <property type="entry name" value="Ribosomal_zn-bd"/>
</dbReference>
<dbReference type="NCBIfam" id="TIGR01031">
    <property type="entry name" value="rpmF_bact"/>
    <property type="match status" value="1"/>
</dbReference>
<dbReference type="PANTHER" id="PTHR35534">
    <property type="entry name" value="50S RIBOSOMAL PROTEIN L32"/>
    <property type="match status" value="1"/>
</dbReference>
<dbReference type="PANTHER" id="PTHR35534:SF1">
    <property type="entry name" value="LARGE RIBOSOMAL SUBUNIT PROTEIN BL32"/>
    <property type="match status" value="1"/>
</dbReference>
<dbReference type="Pfam" id="PF01783">
    <property type="entry name" value="Ribosomal_L32p"/>
    <property type="match status" value="1"/>
</dbReference>
<dbReference type="SUPFAM" id="SSF57829">
    <property type="entry name" value="Zn-binding ribosomal proteins"/>
    <property type="match status" value="1"/>
</dbReference>
<proteinExistence type="inferred from homology"/>
<protein>
    <recommendedName>
        <fullName evidence="1">Large ribosomal subunit protein bL32</fullName>
    </recommendedName>
    <alternativeName>
        <fullName evidence="2">50S ribosomal protein L32</fullName>
    </alternativeName>
</protein>
<name>RL32_STRMU</name>